<protein>
    <recommendedName>
        <fullName>Cuticle collagen 2</fullName>
    </recommendedName>
</protein>
<organism>
    <name type="scientific">Caenorhabditis elegans</name>
    <dbReference type="NCBI Taxonomy" id="6239"/>
    <lineage>
        <taxon>Eukaryota</taxon>
        <taxon>Metazoa</taxon>
        <taxon>Ecdysozoa</taxon>
        <taxon>Nematoda</taxon>
        <taxon>Chromadorea</taxon>
        <taxon>Rhabditida</taxon>
        <taxon>Rhabditina</taxon>
        <taxon>Rhabditomorpha</taxon>
        <taxon>Rhabditoidea</taxon>
        <taxon>Rhabditidae</taxon>
        <taxon>Peloderinae</taxon>
        <taxon>Caenorhabditis</taxon>
    </lineage>
</organism>
<name>COL2_CAEEL</name>
<keyword id="KW-0176">Collagen</keyword>
<keyword id="KW-0193">Cuticle</keyword>
<keyword id="KW-1015">Disulfide bond</keyword>
<keyword id="KW-1185">Reference proteome</keyword>
<keyword id="KW-0677">Repeat</keyword>
<keyword id="KW-0732">Signal</keyword>
<proteinExistence type="evidence at transcript level"/>
<sequence>MDIDARIKAYKFVAYSAVTFSVVAVVSVFITLPMVYNYVNNVKKQIHTDVNFCKVSARDIWSEVHLIKDAPGNNTRVARQAYSTGGAGGGGGGGGGGCDGCCNPGPPGPGGSPGKPGKPGKPGAPGAPGNPGKGASAPCEPVTQPPCQPCPGGPPGPAGPAGPPGPPGPDGNPGSPAGPSGPGPAGPPGPAGPAGNDGAPGAPGGPGEPGASEQGGPGEPGPAGPPGPAGPAGNDGAPGTGGPGPAGPKGPPGAAGAPGADGNPGGPGTAGKPGGEGEKGICPKYCAIDGGVFFEDGTRRR</sequence>
<accession>P17656</accession>
<comment type="function">
    <text>Nematode cuticles are composed largely of collagen-like proteins. The cuticle functions both as an exoskeleton and as a barrier to protect the worm from its environment.</text>
</comment>
<comment type="subunit">
    <text>Collagen polypeptide chains are complexed within the cuticle by disulfide bonds and other types of covalent cross-links.</text>
</comment>
<comment type="tissue specificity">
    <text evidence="3">Syncytial dorsal and ventral epidermis.</text>
</comment>
<comment type="developmental stage">
    <text evidence="3">Low level expression from embryos at comma stage to adult; maximal level in dauer larvae.</text>
</comment>
<comment type="similarity">
    <text evidence="4">Belongs to the cuticular collagen family.</text>
</comment>
<feature type="signal peptide" evidence="1">
    <location>
        <begin position="1"/>
        <end position="37"/>
    </location>
</feature>
<feature type="chain" id="PRO_0000006421" description="Cuticle collagen 2">
    <location>
        <begin position="38"/>
        <end position="301"/>
    </location>
</feature>
<feature type="region of interest" description="Triple-helical region">
    <location>
        <begin position="105"/>
        <end position="134"/>
    </location>
</feature>
<feature type="region of interest" description="Disordered" evidence="2">
    <location>
        <begin position="109"/>
        <end position="284"/>
    </location>
</feature>
<feature type="region of interest" description="Triple-helical region">
    <location>
        <begin position="153"/>
        <end position="176"/>
    </location>
</feature>
<feature type="region of interest" description="Triple-helical region">
    <location>
        <begin position="183"/>
        <end position="212"/>
    </location>
</feature>
<feature type="region of interest" description="Triple-helical region">
    <location>
        <begin position="215"/>
        <end position="282"/>
    </location>
</feature>
<feature type="compositionally biased region" description="Pro residues" evidence="2">
    <location>
        <begin position="143"/>
        <end position="170"/>
    </location>
</feature>
<feature type="compositionally biased region" description="Pro residues" evidence="2">
    <location>
        <begin position="179"/>
        <end position="191"/>
    </location>
</feature>
<feature type="compositionally biased region" description="Gly residues" evidence="2">
    <location>
        <begin position="201"/>
        <end position="218"/>
    </location>
</feature>
<feature type="compositionally biased region" description="Pro residues" evidence="2">
    <location>
        <begin position="219"/>
        <end position="229"/>
    </location>
</feature>
<feature type="compositionally biased region" description="Low complexity" evidence="2">
    <location>
        <begin position="252"/>
        <end position="261"/>
    </location>
</feature>
<feature type="compositionally biased region" description="Gly residues" evidence="2">
    <location>
        <begin position="262"/>
        <end position="274"/>
    </location>
</feature>
<reference key="1">
    <citation type="journal article" date="1982" name="Cell">
        <title>Comparisons of the complete sequences of two collagen genes from Caenorhabditis elegans.</title>
        <authorList>
            <person name="Kramer J.M."/>
            <person name="Cox G.N."/>
            <person name="Hirsh D."/>
        </authorList>
    </citation>
    <scope>NUCLEOTIDE SEQUENCE [GENOMIC DNA]</scope>
    <source>
        <strain>Bristol N2</strain>
    </source>
</reference>
<reference key="2">
    <citation type="journal article" date="1985" name="J. Biol. Chem.">
        <title>Expression of the Caenorhabditis elegans collagen genes col-1 and col-2 is developmentally regulated.</title>
        <authorList>
            <person name="Kramer J.M."/>
            <person name="Cox G.N."/>
            <person name="Hirsh D."/>
        </authorList>
    </citation>
    <scope>NUCLEOTIDE SEQUENCE [GENOMIC DNA]</scope>
    <scope>TISSUE SPECIFICITY</scope>
    <scope>DEVELOPMENTAL STAGE</scope>
    <source>
        <strain>Bristol N2</strain>
    </source>
</reference>
<reference key="3">
    <citation type="journal article" date="1998" name="Science">
        <title>Genome sequence of the nematode C. elegans: a platform for investigating biology.</title>
        <authorList>
            <consortium name="The C. elegans sequencing consortium"/>
        </authorList>
    </citation>
    <scope>NUCLEOTIDE SEQUENCE [LARGE SCALE GENOMIC DNA]</scope>
    <source>
        <strain>Bristol N2</strain>
    </source>
</reference>
<reference key="4">
    <citation type="submission" date="2003-07" db="EMBL/GenBank/DDBJ databases">
        <title>The Caenorhabditis elegans transcriptome project, a complementary view of the genome.</title>
        <authorList>
            <person name="Kohara Y."/>
            <person name="Shin-i T."/>
            <person name="Suzuki Y."/>
            <person name="Sugano S."/>
            <person name="Thierry-Mieg D."/>
            <person name="Thierry-Mieg J."/>
        </authorList>
    </citation>
    <scope>NUCLEOTIDE SEQUENCE [LARGE SCALE MRNA]</scope>
    <source>
        <strain>Bristol N2</strain>
    </source>
</reference>
<evidence type="ECO:0000255" key="1"/>
<evidence type="ECO:0000256" key="2">
    <source>
        <dbReference type="SAM" id="MobiDB-lite"/>
    </source>
</evidence>
<evidence type="ECO:0000269" key="3">
    <source>
    </source>
</evidence>
<evidence type="ECO:0000305" key="4"/>
<dbReference type="EMBL" id="J01048">
    <property type="protein sequence ID" value="AAA27990.1"/>
    <property type="molecule type" value="Genomic_DNA"/>
</dbReference>
<dbReference type="EMBL" id="V00148">
    <property type="protein sequence ID" value="CAA23464.1"/>
    <property type="molecule type" value="Genomic_DNA"/>
</dbReference>
<dbReference type="EMBL" id="Z68301">
    <property type="protein sequence ID" value="CAA92620.1"/>
    <property type="molecule type" value="Genomic_DNA"/>
</dbReference>
<dbReference type="EMBL" id="AY347575">
    <property type="protein sequence ID" value="AAP97869.1"/>
    <property type="molecule type" value="mRNA"/>
</dbReference>
<dbReference type="PIR" id="B31219">
    <property type="entry name" value="B31219"/>
</dbReference>
<dbReference type="RefSeq" id="NP_501829.1">
    <property type="nucleotide sequence ID" value="NM_069428.4"/>
</dbReference>
<dbReference type="SMR" id="P17656"/>
<dbReference type="FunCoup" id="P17656">
    <property type="interactions" value="566"/>
</dbReference>
<dbReference type="STRING" id="6239.W01B6.7.1"/>
<dbReference type="PaxDb" id="6239-W01B6.7"/>
<dbReference type="PeptideAtlas" id="P17656"/>
<dbReference type="EnsemblMetazoa" id="W01B6.7.1">
    <property type="protein sequence ID" value="W01B6.7.1"/>
    <property type="gene ID" value="WBGene00000593"/>
</dbReference>
<dbReference type="GeneID" id="177872"/>
<dbReference type="KEGG" id="cel:CELE_W01B6.7"/>
<dbReference type="UCSC" id="W01B6.7">
    <property type="organism name" value="c. elegans"/>
</dbReference>
<dbReference type="AGR" id="WB:WBGene00000593"/>
<dbReference type="CTD" id="177872"/>
<dbReference type="WormBase" id="W01B6.7">
    <property type="protein sequence ID" value="CE03759"/>
    <property type="gene ID" value="WBGene00000593"/>
    <property type="gene designation" value="col-2"/>
</dbReference>
<dbReference type="eggNOG" id="KOG3544">
    <property type="taxonomic scope" value="Eukaryota"/>
</dbReference>
<dbReference type="GeneTree" id="ENSGT00970000195890"/>
<dbReference type="HOGENOM" id="CLU_001074_4_2_1"/>
<dbReference type="InParanoid" id="P17656"/>
<dbReference type="OMA" id="CDGCCNP"/>
<dbReference type="OrthoDB" id="5876423at2759"/>
<dbReference type="PRO" id="PR:P17656"/>
<dbReference type="Proteomes" id="UP000001940">
    <property type="component" value="Chromosome IV"/>
</dbReference>
<dbReference type="Bgee" id="WBGene00000593">
    <property type="expression patterns" value="Expressed in material anatomical entity and 2 other cell types or tissues"/>
</dbReference>
<dbReference type="GO" id="GO:0005581">
    <property type="term" value="C:collagen trimer"/>
    <property type="evidence" value="ECO:0007669"/>
    <property type="project" value="UniProtKB-KW"/>
</dbReference>
<dbReference type="GO" id="GO:0042302">
    <property type="term" value="F:structural constituent of cuticle"/>
    <property type="evidence" value="ECO:0007669"/>
    <property type="project" value="UniProtKB-KW"/>
</dbReference>
<dbReference type="InterPro" id="IPR002486">
    <property type="entry name" value="Col_cuticle_N"/>
</dbReference>
<dbReference type="PANTHER" id="PTHR24637">
    <property type="entry name" value="COLLAGEN"/>
    <property type="match status" value="1"/>
</dbReference>
<dbReference type="PANTHER" id="PTHR24637:SF235">
    <property type="entry name" value="CUTICLE COLLAGEN 2"/>
    <property type="match status" value="1"/>
</dbReference>
<dbReference type="Pfam" id="PF01484">
    <property type="entry name" value="Col_cuticle_N"/>
    <property type="match status" value="1"/>
</dbReference>
<dbReference type="SMART" id="SM01088">
    <property type="entry name" value="Col_cuticle_N"/>
    <property type="match status" value="1"/>
</dbReference>
<gene>
    <name type="primary">col-2</name>
    <name type="ORF">W01B6.7</name>
</gene>